<name>NDUB7_PONPY</name>
<proteinExistence type="evidence at transcript level"/>
<organism>
    <name type="scientific">Pongo pygmaeus</name>
    <name type="common">Bornean orangutan</name>
    <dbReference type="NCBI Taxonomy" id="9600"/>
    <lineage>
        <taxon>Eukaryota</taxon>
        <taxon>Metazoa</taxon>
        <taxon>Chordata</taxon>
        <taxon>Craniata</taxon>
        <taxon>Vertebrata</taxon>
        <taxon>Euteleostomi</taxon>
        <taxon>Mammalia</taxon>
        <taxon>Eutheria</taxon>
        <taxon>Euarchontoglires</taxon>
        <taxon>Primates</taxon>
        <taxon>Haplorrhini</taxon>
        <taxon>Catarrhini</taxon>
        <taxon>Hominidae</taxon>
        <taxon>Pongo</taxon>
    </lineage>
</organism>
<protein>
    <recommendedName>
        <fullName>NADH dehydrogenase [ubiquinone] 1 beta subcomplex subunit 7</fullName>
    </recommendedName>
    <alternativeName>
        <fullName>Complex I-B18</fullName>
        <shortName>CI-B18</shortName>
    </alternativeName>
    <alternativeName>
        <fullName>NADH-ubiquinone oxidoreductase B18 subunit</fullName>
    </alternativeName>
</protein>
<feature type="initiator methionine" description="Removed">
    <location>
        <position position="1"/>
    </location>
</feature>
<feature type="chain" id="PRO_0000251840" description="NADH dehydrogenase [ubiquinone] 1 beta subcomplex subunit 7">
    <location>
        <begin position="2"/>
        <end position="137"/>
    </location>
</feature>
<feature type="domain" description="CHCH" evidence="4">
    <location>
        <begin position="56"/>
        <end position="98"/>
    </location>
</feature>
<feature type="region of interest" description="Disordered" evidence="5">
    <location>
        <begin position="113"/>
        <end position="137"/>
    </location>
</feature>
<feature type="short sequence motif" description="Cx9C motif 1" evidence="4">
    <location>
        <begin position="59"/>
        <end position="69"/>
    </location>
</feature>
<feature type="short sequence motif" description="Cx9C motif 2" evidence="4">
    <location>
        <begin position="80"/>
        <end position="90"/>
    </location>
</feature>
<feature type="modified residue" description="Phosphoserine" evidence="3">
    <location>
        <position position="73"/>
    </location>
</feature>
<feature type="lipid moiety-binding region" description="N-myristoyl glycine" evidence="1">
    <location>
        <position position="2"/>
    </location>
</feature>
<feature type="disulfide bond" evidence="4">
    <location>
        <begin position="59"/>
        <end position="90"/>
    </location>
</feature>
<feature type="disulfide bond" evidence="4">
    <location>
        <begin position="69"/>
        <end position="80"/>
    </location>
</feature>
<gene>
    <name type="primary">NDUFB7</name>
</gene>
<keyword id="KW-1015">Disulfide bond</keyword>
<keyword id="KW-0249">Electron transport</keyword>
<keyword id="KW-0449">Lipoprotein</keyword>
<keyword id="KW-0472">Membrane</keyword>
<keyword id="KW-0496">Mitochondrion</keyword>
<keyword id="KW-0999">Mitochondrion inner membrane</keyword>
<keyword id="KW-0519">Myristate</keyword>
<keyword id="KW-0597">Phosphoprotein</keyword>
<keyword id="KW-0679">Respiratory chain</keyword>
<keyword id="KW-0813">Transport</keyword>
<sequence>MGAHLVRRYLGDASVEPDPLQMPTFPPDYGFPERKEREMVATQQEMMDAQLRLQLRDYCAHYLIRLLKCKRDSFPNFLACKQERHDWDYCEHRDYVMRMKEFERERRLLQRKKRREKKAAELAKGQGPGEVDPKVAL</sequence>
<comment type="function">
    <text evidence="2">Accessory subunit of the mitochondrial membrane respiratory chain NADH dehydrogenase (Complex I), that is believed not to be involved in catalysis. Complex I functions in the transfer of electrons from NADH to the respiratory chain. The immediate electron acceptor for the enzyme is believed to be ubiquinone.</text>
</comment>
<comment type="subunit">
    <text evidence="2">Complex I is composed of 45 different subunits.</text>
</comment>
<comment type="subcellular location">
    <subcellularLocation>
        <location evidence="2">Mitochondrion inner membrane</location>
        <topology evidence="2">Peripheral membrane protein</topology>
    </subcellularLocation>
    <subcellularLocation>
        <location evidence="2">Mitochondrion intermembrane space</location>
    </subcellularLocation>
</comment>
<comment type="domain">
    <text evidence="2">Contains two C-X9-C motifs that are predicted to form a helix-coil-helix structure, permitting the formation of intramolecular disulfide bonds.</text>
</comment>
<comment type="similarity">
    <text evidence="6">Belongs to the complex I NDUFB7 subunit family.</text>
</comment>
<reference key="1">
    <citation type="journal article" date="2006" name="Gene">
        <title>Adaptive selection of mitochondrial complex I subunits during primate radiation.</title>
        <authorList>
            <person name="Mishmar D."/>
            <person name="Ruiz-Pesini E."/>
            <person name="Mondragon-Palomino M."/>
            <person name="Procaccio V."/>
            <person name="Gaut B."/>
            <person name="Wallace D.C."/>
        </authorList>
    </citation>
    <scope>NUCLEOTIDE SEQUENCE [MRNA]</scope>
</reference>
<accession>Q0MQE2</accession>
<evidence type="ECO:0000250" key="1"/>
<evidence type="ECO:0000250" key="2">
    <source>
        <dbReference type="UniProtKB" id="P17568"/>
    </source>
</evidence>
<evidence type="ECO:0000250" key="3">
    <source>
        <dbReference type="UniProtKB" id="Q9CR61"/>
    </source>
</evidence>
<evidence type="ECO:0000255" key="4">
    <source>
        <dbReference type="PROSITE-ProRule" id="PRU01150"/>
    </source>
</evidence>
<evidence type="ECO:0000256" key="5">
    <source>
        <dbReference type="SAM" id="MobiDB-lite"/>
    </source>
</evidence>
<evidence type="ECO:0000305" key="6"/>
<dbReference type="EMBL" id="DQ885692">
    <property type="protein sequence ID" value="ABH12201.1"/>
    <property type="molecule type" value="mRNA"/>
</dbReference>
<dbReference type="SMR" id="Q0MQE2"/>
<dbReference type="GO" id="GO:0005743">
    <property type="term" value="C:mitochondrial inner membrane"/>
    <property type="evidence" value="ECO:0007669"/>
    <property type="project" value="UniProtKB-SubCell"/>
</dbReference>
<dbReference type="GO" id="GO:0005758">
    <property type="term" value="C:mitochondrial intermembrane space"/>
    <property type="evidence" value="ECO:0007669"/>
    <property type="project" value="UniProtKB-SubCell"/>
</dbReference>
<dbReference type="GO" id="GO:0045271">
    <property type="term" value="C:respiratory chain complex I"/>
    <property type="evidence" value="ECO:0000250"/>
    <property type="project" value="UniProtKB"/>
</dbReference>
<dbReference type="GO" id="GO:0008137">
    <property type="term" value="F:NADH dehydrogenase (ubiquinone) activity"/>
    <property type="evidence" value="ECO:0000250"/>
    <property type="project" value="UniProtKB"/>
</dbReference>
<dbReference type="InterPro" id="IPR008698">
    <property type="entry name" value="NDUB7"/>
</dbReference>
<dbReference type="PANTHER" id="PTHR20900:SF0">
    <property type="entry name" value="NADH DEHYDROGENASE [UBIQUINONE] 1 BETA SUBCOMPLEX SUBUNIT 7"/>
    <property type="match status" value="1"/>
</dbReference>
<dbReference type="PANTHER" id="PTHR20900">
    <property type="entry name" value="NADH:UBIQUINONE OXIDOREDUCTASE B18-LIKE SUBUNIT"/>
    <property type="match status" value="1"/>
</dbReference>
<dbReference type="Pfam" id="PF05676">
    <property type="entry name" value="NDUF_B7"/>
    <property type="match status" value="1"/>
</dbReference>
<dbReference type="PROSITE" id="PS51808">
    <property type="entry name" value="CHCH"/>
    <property type="match status" value="1"/>
</dbReference>